<comment type="function">
    <text evidence="1">Produces ATP from ADP in the presence of a proton gradient across the membrane.</text>
</comment>
<comment type="subunit">
    <text>F-type ATPases have 2 components, CF(1) - the catalytic core - and CF(0) - the membrane proton channel. CF(1) has five subunits: alpha(3), beta(3), gamma(1), delta(1), epsilon(1). CF(0) has three main subunits: a, b and c.</text>
</comment>
<comment type="subcellular location">
    <subcellularLocation>
        <location evidence="1">Cell membrane</location>
        <topology evidence="1">Peripheral membrane protein</topology>
    </subcellularLocation>
</comment>
<comment type="similarity">
    <text evidence="2">Belongs to the ATPase epsilon chain family.</text>
</comment>
<proteinExistence type="inferred from homology"/>
<gene>
    <name type="primary">atpC</name>
    <name type="ordered locus">BU009</name>
</gene>
<protein>
    <recommendedName>
        <fullName>ATP synthase epsilon chain</fullName>
    </recommendedName>
    <alternativeName>
        <fullName>ATP synthase F1 sector epsilon subunit</fullName>
    </alternativeName>
    <alternativeName>
        <fullName>F-ATPase epsilon subunit</fullName>
    </alternativeName>
</protein>
<sequence length="138" mass="15463">MNFYLDVVSLTKTIFSGFVEKIRVSGSEGELGIYPGHAQLLSILKPGMVYIFHKKDKKEECIYISGGILEVQPSVVSILADVAIHAIDLDRSRILKTKKNAEESIKSNNTKINKDAILLQISKEIAKLRVLEVMDKFK</sequence>
<name>ATPE_BUCAI</name>
<feature type="chain" id="PRO_0000188111" description="ATP synthase epsilon chain">
    <location>
        <begin position="1"/>
        <end position="138"/>
    </location>
</feature>
<evidence type="ECO:0000250" key="1"/>
<evidence type="ECO:0000305" key="2"/>
<keyword id="KW-0066">ATP synthesis</keyword>
<keyword id="KW-1003">Cell membrane</keyword>
<keyword id="KW-0139">CF(1)</keyword>
<keyword id="KW-0375">Hydrogen ion transport</keyword>
<keyword id="KW-0406">Ion transport</keyword>
<keyword id="KW-0472">Membrane</keyword>
<keyword id="KW-1185">Reference proteome</keyword>
<keyword id="KW-0813">Transport</keyword>
<accession>P57125</accession>
<dbReference type="EMBL" id="BA000003">
    <property type="protein sequence ID" value="BAB12737.1"/>
    <property type="molecule type" value="Genomic_DNA"/>
</dbReference>
<dbReference type="RefSeq" id="NP_239851.1">
    <property type="nucleotide sequence ID" value="NC_002528.1"/>
</dbReference>
<dbReference type="RefSeq" id="WP_009873971.1">
    <property type="nucleotide sequence ID" value="NZ_AP036055.1"/>
</dbReference>
<dbReference type="SMR" id="P57125"/>
<dbReference type="STRING" id="563178.BUAP5A_009"/>
<dbReference type="EnsemblBacteria" id="BAB12737">
    <property type="protein sequence ID" value="BAB12737"/>
    <property type="gene ID" value="BAB12737"/>
</dbReference>
<dbReference type="KEGG" id="buc:BU009"/>
<dbReference type="PATRIC" id="fig|107806.10.peg.22"/>
<dbReference type="eggNOG" id="COG0355">
    <property type="taxonomic scope" value="Bacteria"/>
</dbReference>
<dbReference type="HOGENOM" id="CLU_084338_2_0_6"/>
<dbReference type="Proteomes" id="UP000001806">
    <property type="component" value="Chromosome"/>
</dbReference>
<dbReference type="GO" id="GO:0005886">
    <property type="term" value="C:plasma membrane"/>
    <property type="evidence" value="ECO:0007669"/>
    <property type="project" value="UniProtKB-SubCell"/>
</dbReference>
<dbReference type="GO" id="GO:0045259">
    <property type="term" value="C:proton-transporting ATP synthase complex"/>
    <property type="evidence" value="ECO:0007669"/>
    <property type="project" value="UniProtKB-KW"/>
</dbReference>
<dbReference type="GO" id="GO:0005524">
    <property type="term" value="F:ATP binding"/>
    <property type="evidence" value="ECO:0007669"/>
    <property type="project" value="UniProtKB-UniRule"/>
</dbReference>
<dbReference type="GO" id="GO:0046933">
    <property type="term" value="F:proton-transporting ATP synthase activity, rotational mechanism"/>
    <property type="evidence" value="ECO:0007669"/>
    <property type="project" value="UniProtKB-UniRule"/>
</dbReference>
<dbReference type="CDD" id="cd12152">
    <property type="entry name" value="F1-ATPase_delta"/>
    <property type="match status" value="1"/>
</dbReference>
<dbReference type="FunFam" id="2.60.15.10:FF:000001">
    <property type="entry name" value="ATP synthase epsilon chain"/>
    <property type="match status" value="1"/>
</dbReference>
<dbReference type="Gene3D" id="1.20.5.440">
    <property type="entry name" value="ATP synthase delta/epsilon subunit, C-terminal domain"/>
    <property type="match status" value="1"/>
</dbReference>
<dbReference type="Gene3D" id="2.60.15.10">
    <property type="entry name" value="F0F1 ATP synthase delta/epsilon subunit, N-terminal"/>
    <property type="match status" value="1"/>
</dbReference>
<dbReference type="HAMAP" id="MF_00530">
    <property type="entry name" value="ATP_synth_epsil_bac"/>
    <property type="match status" value="1"/>
</dbReference>
<dbReference type="InterPro" id="IPR036794">
    <property type="entry name" value="ATP_F1_dsu/esu_C_sf"/>
</dbReference>
<dbReference type="InterPro" id="IPR001469">
    <property type="entry name" value="ATP_synth_F1_dsu/esu"/>
</dbReference>
<dbReference type="InterPro" id="IPR020546">
    <property type="entry name" value="ATP_synth_F1_dsu/esu_N"/>
</dbReference>
<dbReference type="InterPro" id="IPR036771">
    <property type="entry name" value="ATPsynth_dsu/esu_N"/>
</dbReference>
<dbReference type="NCBIfam" id="TIGR01216">
    <property type="entry name" value="ATP_synt_epsi"/>
    <property type="match status" value="1"/>
</dbReference>
<dbReference type="NCBIfam" id="NF001847">
    <property type="entry name" value="PRK00571.1-4"/>
    <property type="match status" value="1"/>
</dbReference>
<dbReference type="PANTHER" id="PTHR13822">
    <property type="entry name" value="ATP SYNTHASE DELTA/EPSILON CHAIN"/>
    <property type="match status" value="1"/>
</dbReference>
<dbReference type="PANTHER" id="PTHR13822:SF10">
    <property type="entry name" value="ATP SYNTHASE EPSILON CHAIN, CHLOROPLASTIC"/>
    <property type="match status" value="1"/>
</dbReference>
<dbReference type="Pfam" id="PF02823">
    <property type="entry name" value="ATP-synt_DE_N"/>
    <property type="match status" value="1"/>
</dbReference>
<dbReference type="SUPFAM" id="SSF46604">
    <property type="entry name" value="Epsilon subunit of F1F0-ATP synthase C-terminal domain"/>
    <property type="match status" value="1"/>
</dbReference>
<dbReference type="SUPFAM" id="SSF51344">
    <property type="entry name" value="Epsilon subunit of F1F0-ATP synthase N-terminal domain"/>
    <property type="match status" value="1"/>
</dbReference>
<reference key="1">
    <citation type="journal article" date="2000" name="Nature">
        <title>Genome sequence of the endocellular bacterial symbiont of aphids Buchnera sp. APS.</title>
        <authorList>
            <person name="Shigenobu S."/>
            <person name="Watanabe H."/>
            <person name="Hattori M."/>
            <person name="Sakaki Y."/>
            <person name="Ishikawa H."/>
        </authorList>
    </citation>
    <scope>NUCLEOTIDE SEQUENCE [LARGE SCALE GENOMIC DNA]</scope>
    <source>
        <strain>APS</strain>
    </source>
</reference>
<organism>
    <name type="scientific">Buchnera aphidicola subsp. Acyrthosiphon pisum (strain APS)</name>
    <name type="common">Acyrthosiphon pisum symbiotic bacterium</name>
    <dbReference type="NCBI Taxonomy" id="107806"/>
    <lineage>
        <taxon>Bacteria</taxon>
        <taxon>Pseudomonadati</taxon>
        <taxon>Pseudomonadota</taxon>
        <taxon>Gammaproteobacteria</taxon>
        <taxon>Enterobacterales</taxon>
        <taxon>Erwiniaceae</taxon>
        <taxon>Buchnera</taxon>
    </lineage>
</organism>